<evidence type="ECO:0000255" key="1">
    <source>
        <dbReference type="HAMAP-Rule" id="MF_01862"/>
    </source>
</evidence>
<reference key="1">
    <citation type="journal article" date="2005" name="Science">
        <title>Life at depth: Photobacterium profundum genome sequence and expression analysis.</title>
        <authorList>
            <person name="Vezzi A."/>
            <person name="Campanaro S."/>
            <person name="D'Angelo M."/>
            <person name="Simonato F."/>
            <person name="Vitulo N."/>
            <person name="Lauro F.M."/>
            <person name="Cestaro A."/>
            <person name="Malacrida G."/>
            <person name="Simionati B."/>
            <person name="Cannata N."/>
            <person name="Romualdi C."/>
            <person name="Bartlett D.H."/>
            <person name="Valle G."/>
        </authorList>
    </citation>
    <scope>NUCLEOTIDE SEQUENCE [LARGE SCALE GENOMIC DNA]</scope>
    <source>
        <strain>ATCC BAA-1253 / SS9</strain>
    </source>
</reference>
<dbReference type="EC" id="2.1.1.172" evidence="1"/>
<dbReference type="EMBL" id="CR378664">
    <property type="protein sequence ID" value="CAG18950.1"/>
    <property type="molecule type" value="Genomic_DNA"/>
</dbReference>
<dbReference type="RefSeq" id="WP_011217303.1">
    <property type="nucleotide sequence ID" value="NC_006370.1"/>
</dbReference>
<dbReference type="SMR" id="Q6LUS5"/>
<dbReference type="STRING" id="298386.PBPRA0527"/>
<dbReference type="KEGG" id="ppr:PBPRA0527"/>
<dbReference type="eggNOG" id="COG2813">
    <property type="taxonomic scope" value="Bacteria"/>
</dbReference>
<dbReference type="HOGENOM" id="CLU_049581_0_1_6"/>
<dbReference type="Proteomes" id="UP000000593">
    <property type="component" value="Chromosome 1"/>
</dbReference>
<dbReference type="GO" id="GO:0005737">
    <property type="term" value="C:cytoplasm"/>
    <property type="evidence" value="ECO:0007669"/>
    <property type="project" value="UniProtKB-SubCell"/>
</dbReference>
<dbReference type="GO" id="GO:0052914">
    <property type="term" value="F:16S rRNA (guanine(1207)-N(2))-methyltransferase activity"/>
    <property type="evidence" value="ECO:0007669"/>
    <property type="project" value="UniProtKB-EC"/>
</dbReference>
<dbReference type="GO" id="GO:0003676">
    <property type="term" value="F:nucleic acid binding"/>
    <property type="evidence" value="ECO:0007669"/>
    <property type="project" value="InterPro"/>
</dbReference>
<dbReference type="CDD" id="cd02440">
    <property type="entry name" value="AdoMet_MTases"/>
    <property type="match status" value="1"/>
</dbReference>
<dbReference type="Gene3D" id="3.40.50.150">
    <property type="entry name" value="Vaccinia Virus protein VP39"/>
    <property type="match status" value="2"/>
</dbReference>
<dbReference type="HAMAP" id="MF_01862">
    <property type="entry name" value="16SrRNA_methyltr_C"/>
    <property type="match status" value="1"/>
</dbReference>
<dbReference type="InterPro" id="IPR002052">
    <property type="entry name" value="DNA_methylase_N6_adenine_CS"/>
</dbReference>
<dbReference type="InterPro" id="IPR013675">
    <property type="entry name" value="Mtase_sm_N"/>
</dbReference>
<dbReference type="InterPro" id="IPR023543">
    <property type="entry name" value="rRNA_ssu_MeTfrase_C"/>
</dbReference>
<dbReference type="InterPro" id="IPR046977">
    <property type="entry name" value="RsmC/RlmG"/>
</dbReference>
<dbReference type="InterPro" id="IPR029063">
    <property type="entry name" value="SAM-dependent_MTases_sf"/>
</dbReference>
<dbReference type="InterPro" id="IPR007848">
    <property type="entry name" value="Small_mtfrase_dom"/>
</dbReference>
<dbReference type="NCBIfam" id="NF007023">
    <property type="entry name" value="PRK09489.1"/>
    <property type="match status" value="1"/>
</dbReference>
<dbReference type="PANTHER" id="PTHR47816">
    <property type="entry name" value="RIBOSOMAL RNA SMALL SUBUNIT METHYLTRANSFERASE C"/>
    <property type="match status" value="1"/>
</dbReference>
<dbReference type="PANTHER" id="PTHR47816:SF4">
    <property type="entry name" value="RIBOSOMAL RNA SMALL SUBUNIT METHYLTRANSFERASE C"/>
    <property type="match status" value="1"/>
</dbReference>
<dbReference type="Pfam" id="PF05175">
    <property type="entry name" value="MTS"/>
    <property type="match status" value="1"/>
</dbReference>
<dbReference type="Pfam" id="PF08468">
    <property type="entry name" value="MTS_N"/>
    <property type="match status" value="1"/>
</dbReference>
<dbReference type="SUPFAM" id="SSF53335">
    <property type="entry name" value="S-adenosyl-L-methionine-dependent methyltransferases"/>
    <property type="match status" value="1"/>
</dbReference>
<gene>
    <name evidence="1" type="primary">rsmC</name>
    <name type="ordered locus">PBPRA0527</name>
</gene>
<accession>Q6LUS5</accession>
<name>RSMC_PHOPR</name>
<keyword id="KW-0963">Cytoplasm</keyword>
<keyword id="KW-0489">Methyltransferase</keyword>
<keyword id="KW-1185">Reference proteome</keyword>
<keyword id="KW-0698">rRNA processing</keyword>
<keyword id="KW-0949">S-adenosyl-L-methionine</keyword>
<keyword id="KW-0808">Transferase</keyword>
<organism>
    <name type="scientific">Photobacterium profundum (strain SS9)</name>
    <dbReference type="NCBI Taxonomy" id="298386"/>
    <lineage>
        <taxon>Bacteria</taxon>
        <taxon>Pseudomonadati</taxon>
        <taxon>Pseudomonadota</taxon>
        <taxon>Gammaproteobacteria</taxon>
        <taxon>Vibrionales</taxon>
        <taxon>Vibrionaceae</taxon>
        <taxon>Photobacterium</taxon>
    </lineage>
</organism>
<protein>
    <recommendedName>
        <fullName evidence="1">Ribosomal RNA small subunit methyltransferase C</fullName>
        <ecNumber evidence="1">2.1.1.172</ecNumber>
    </recommendedName>
    <alternativeName>
        <fullName evidence="1">16S rRNA m2G1207 methyltransferase</fullName>
    </alternativeName>
    <alternativeName>
        <fullName evidence="1">rRNA (guanine-N(2)-)-methyltransferase RsmC</fullName>
    </alternativeName>
</protein>
<proteinExistence type="inferred from homology"/>
<sequence>MSYTAASQVVARQLAFFEGRKVLIAGELSDAYPVELANVAQSVAVFTTNFGYHNSMSRHDNIDCHFGVQLDAKLDIDMLLIYWPKAKAEADYLMSMLLAKFGPETEICIVGENRSGVRSAEKMFQPYGPLTKYDSARRCSFYWGRCDNEVKPFDLNDWFKSYPINVSGVELTVRSLPGVFSHGEFDNGSKLLINTLPSLRGKVLDFGCGAGVLGAIMKAKHPRIELELCDISALAIESAKETFKVNQLDAKFTATDVYSELKGPYNYLISNPPFHAGLKTFYTATENFIAQAPNYLFSDGQLIIVANSFLKYPELIEQSLETCNALANTNKFTIYSAKK</sequence>
<comment type="function">
    <text evidence="1">Specifically methylates the guanine in position 1207 of 16S rRNA in the 30S particle.</text>
</comment>
<comment type="catalytic activity">
    <reaction evidence="1">
        <text>guanosine(1207) in 16S rRNA + S-adenosyl-L-methionine = N(2)-methylguanosine(1207) in 16S rRNA + S-adenosyl-L-homocysteine + H(+)</text>
        <dbReference type="Rhea" id="RHEA:42736"/>
        <dbReference type="Rhea" id="RHEA-COMP:10213"/>
        <dbReference type="Rhea" id="RHEA-COMP:10214"/>
        <dbReference type="ChEBI" id="CHEBI:15378"/>
        <dbReference type="ChEBI" id="CHEBI:57856"/>
        <dbReference type="ChEBI" id="CHEBI:59789"/>
        <dbReference type="ChEBI" id="CHEBI:74269"/>
        <dbReference type="ChEBI" id="CHEBI:74481"/>
        <dbReference type="EC" id="2.1.1.172"/>
    </reaction>
</comment>
<comment type="subunit">
    <text evidence="1">Monomer.</text>
</comment>
<comment type="subcellular location">
    <subcellularLocation>
        <location evidence="1">Cytoplasm</location>
    </subcellularLocation>
</comment>
<comment type="similarity">
    <text evidence="1">Belongs to the methyltransferase superfamily. RsmC family.</text>
</comment>
<feature type="chain" id="PRO_0000369729" description="Ribosomal RNA small subunit methyltransferase C">
    <location>
        <begin position="1"/>
        <end position="339"/>
    </location>
</feature>